<evidence type="ECO:0000255" key="1">
    <source>
        <dbReference type="HAMAP-Rule" id="MF_00119"/>
    </source>
</evidence>
<evidence type="ECO:0000305" key="2"/>
<sequence length="414" mass="45076">MSGGDKRQPEVNIGVVGHVDHGKTTLVQALTGVWTMRHSEEIRRGMTIKLGYADGEVWECEGCGFPERFSPEPVCECDPQASASLRRRVSYVDAPGHEILMATMLSGAALMDGALLVVAANEPCPQPQTKEHLVALEIIGIKNIVIVQNKVDVVSRERAKESYQEILNFIKGTIAEGSPIIPVSALKRANIDAVLAAIEKFIPTPPRDLDKPPVMYISRSFDVNRPGTPPERLVGGVVGGSIIQGVFRVGDEIEISPGVAVRKPGGRVEYVRLHTTITSLRFGSIEVEEARPGGLVAIGTQLDPSVTKADNLVGNVVGKPGELPEPLTTLRIEHHLLEKVVGMKEEARVEPIRRGEMLMLSVGTAITLGVVTRAGKDEIEVQLRRPVVTWPKARVALSRRIMGRWRLIGWGLIK</sequence>
<protein>
    <recommendedName>
        <fullName evidence="1">Translation initiation factor 2 subunit gamma</fullName>
        <ecNumber evidence="1">3.6.5.3</ecNumber>
    </recommendedName>
    <alternativeName>
        <fullName evidence="1">aIF2-gamma</fullName>
    </alternativeName>
    <alternativeName>
        <fullName evidence="1">eIF-2-gamma</fullName>
    </alternativeName>
</protein>
<comment type="function">
    <text evidence="1">eIF-2 functions in the early steps of protein synthesis by forming a ternary complex with GTP and initiator tRNA.</text>
</comment>
<comment type="catalytic activity">
    <reaction evidence="1">
        <text>GTP + H2O = GDP + phosphate + H(+)</text>
        <dbReference type="Rhea" id="RHEA:19669"/>
        <dbReference type="ChEBI" id="CHEBI:15377"/>
        <dbReference type="ChEBI" id="CHEBI:15378"/>
        <dbReference type="ChEBI" id="CHEBI:37565"/>
        <dbReference type="ChEBI" id="CHEBI:43474"/>
        <dbReference type="ChEBI" id="CHEBI:58189"/>
        <dbReference type="EC" id="3.6.5.3"/>
    </reaction>
</comment>
<comment type="cofactor">
    <cofactor evidence="1">
        <name>Mg(2+)</name>
        <dbReference type="ChEBI" id="CHEBI:18420"/>
    </cofactor>
</comment>
<comment type="subunit">
    <text evidence="1">Heterotrimer composed of an alpha, a beta and a gamma chain.</text>
</comment>
<comment type="similarity">
    <text evidence="1 2">Belongs to the TRAFAC class translation factor GTPase superfamily. Classic translation factor GTPase family. EIF2G subfamily.</text>
</comment>
<proteinExistence type="inferred from homology"/>
<name>IF2G_AERPE</name>
<organism>
    <name type="scientific">Aeropyrum pernix (strain ATCC 700893 / DSM 11879 / JCM 9820 / NBRC 100138 / K1)</name>
    <dbReference type="NCBI Taxonomy" id="272557"/>
    <lineage>
        <taxon>Archaea</taxon>
        <taxon>Thermoproteota</taxon>
        <taxon>Thermoprotei</taxon>
        <taxon>Desulfurococcales</taxon>
        <taxon>Desulfurococcaceae</taxon>
        <taxon>Aeropyrum</taxon>
    </lineage>
</organism>
<accession>Q9Y9C1</accession>
<keyword id="KW-0342">GTP-binding</keyword>
<keyword id="KW-0378">Hydrolase</keyword>
<keyword id="KW-0396">Initiation factor</keyword>
<keyword id="KW-0460">Magnesium</keyword>
<keyword id="KW-0479">Metal-binding</keyword>
<keyword id="KW-0547">Nucleotide-binding</keyword>
<keyword id="KW-0648">Protein biosynthesis</keyword>
<keyword id="KW-1185">Reference proteome</keyword>
<keyword id="KW-0862">Zinc</keyword>
<gene>
    <name evidence="1" type="primary">eif2g</name>
    <name type="ordered locus">APE_2366.1</name>
</gene>
<feature type="chain" id="PRO_0000137449" description="Translation initiation factor 2 subunit gamma">
    <location>
        <begin position="1"/>
        <end position="414"/>
    </location>
</feature>
<feature type="domain" description="tr-type G" evidence="1">
    <location>
        <begin position="8"/>
        <end position="206"/>
    </location>
</feature>
<feature type="region of interest" description="G1" evidence="1">
    <location>
        <begin position="17"/>
        <end position="24"/>
    </location>
</feature>
<feature type="region of interest" description="G2" evidence="1">
    <location>
        <begin position="45"/>
        <end position="49"/>
    </location>
</feature>
<feature type="region of interest" description="G3" evidence="1">
    <location>
        <begin position="93"/>
        <end position="96"/>
    </location>
</feature>
<feature type="region of interest" description="G4" evidence="1">
    <location>
        <begin position="149"/>
        <end position="152"/>
    </location>
</feature>
<feature type="region of interest" description="G5" evidence="1">
    <location>
        <begin position="184"/>
        <end position="186"/>
    </location>
</feature>
<feature type="binding site" evidence="1">
    <location>
        <begin position="20"/>
        <end position="25"/>
    </location>
    <ligand>
        <name>GTP</name>
        <dbReference type="ChEBI" id="CHEBI:37565"/>
    </ligand>
</feature>
<feature type="binding site" evidence="1">
    <location>
        <position position="20"/>
    </location>
    <ligand>
        <name>Mg(2+)</name>
        <dbReference type="ChEBI" id="CHEBI:18420"/>
        <label>2</label>
    </ligand>
</feature>
<feature type="binding site" evidence="1">
    <location>
        <position position="24"/>
    </location>
    <ligand>
        <name>Mg(2+)</name>
        <dbReference type="ChEBI" id="CHEBI:18420"/>
        <label>1</label>
    </ligand>
</feature>
<feature type="binding site" evidence="1">
    <location>
        <position position="45"/>
    </location>
    <ligand>
        <name>Mg(2+)</name>
        <dbReference type="ChEBI" id="CHEBI:18420"/>
        <label>2</label>
    </ligand>
</feature>
<feature type="binding site" evidence="1">
    <location>
        <position position="47"/>
    </location>
    <ligand>
        <name>Mg(2+)</name>
        <dbReference type="ChEBI" id="CHEBI:18420"/>
        <label>1</label>
    </ligand>
</feature>
<feature type="binding site" evidence="1">
    <location>
        <position position="60"/>
    </location>
    <ligand>
        <name>Zn(2+)</name>
        <dbReference type="ChEBI" id="CHEBI:29105"/>
    </ligand>
</feature>
<feature type="binding site" evidence="1">
    <location>
        <position position="63"/>
    </location>
    <ligand>
        <name>Zn(2+)</name>
        <dbReference type="ChEBI" id="CHEBI:29105"/>
    </ligand>
</feature>
<feature type="binding site" evidence="1">
    <location>
        <position position="75"/>
    </location>
    <ligand>
        <name>Zn(2+)</name>
        <dbReference type="ChEBI" id="CHEBI:29105"/>
    </ligand>
</feature>
<feature type="binding site" evidence="1">
    <location>
        <position position="77"/>
    </location>
    <ligand>
        <name>Zn(2+)</name>
        <dbReference type="ChEBI" id="CHEBI:29105"/>
    </ligand>
</feature>
<feature type="binding site" evidence="1">
    <location>
        <begin position="149"/>
        <end position="152"/>
    </location>
    <ligand>
        <name>GTP</name>
        <dbReference type="ChEBI" id="CHEBI:37565"/>
    </ligand>
</feature>
<feature type="binding site" evidence="1">
    <location>
        <begin position="184"/>
        <end position="186"/>
    </location>
    <ligand>
        <name>GTP</name>
        <dbReference type="ChEBI" id="CHEBI:37565"/>
    </ligand>
</feature>
<reference key="1">
    <citation type="journal article" date="1999" name="DNA Res.">
        <title>Complete genome sequence of an aerobic hyper-thermophilic crenarchaeon, Aeropyrum pernix K1.</title>
        <authorList>
            <person name="Kawarabayasi Y."/>
            <person name="Hino Y."/>
            <person name="Horikawa H."/>
            <person name="Yamazaki S."/>
            <person name="Haikawa Y."/>
            <person name="Jin-no K."/>
            <person name="Takahashi M."/>
            <person name="Sekine M."/>
            <person name="Baba S."/>
            <person name="Ankai A."/>
            <person name="Kosugi H."/>
            <person name="Hosoyama A."/>
            <person name="Fukui S."/>
            <person name="Nagai Y."/>
            <person name="Nishijima K."/>
            <person name="Nakazawa H."/>
            <person name="Takamiya M."/>
            <person name="Masuda S."/>
            <person name="Funahashi T."/>
            <person name="Tanaka T."/>
            <person name="Kudoh Y."/>
            <person name="Yamazaki J."/>
            <person name="Kushida N."/>
            <person name="Oguchi A."/>
            <person name="Aoki K."/>
            <person name="Kubota K."/>
            <person name="Nakamura Y."/>
            <person name="Nomura N."/>
            <person name="Sako Y."/>
            <person name="Kikuchi H."/>
        </authorList>
    </citation>
    <scope>NUCLEOTIDE SEQUENCE [LARGE SCALE GENOMIC DNA]</scope>
    <source>
        <strain>ATCC 700893 / DSM 11879 / JCM 9820 / NBRC 100138 / K1</strain>
    </source>
</reference>
<dbReference type="EC" id="3.6.5.3" evidence="1"/>
<dbReference type="EMBL" id="BA000002">
    <property type="protein sequence ID" value="BAA81379.2"/>
    <property type="molecule type" value="Genomic_DNA"/>
</dbReference>
<dbReference type="PIR" id="C72465">
    <property type="entry name" value="C72465"/>
</dbReference>
<dbReference type="RefSeq" id="WP_010866968.1">
    <property type="nucleotide sequence ID" value="NC_000854.2"/>
</dbReference>
<dbReference type="SMR" id="Q9Y9C1"/>
<dbReference type="STRING" id="272557.APE_2366.1"/>
<dbReference type="EnsemblBacteria" id="BAA81379">
    <property type="protein sequence ID" value="BAA81379"/>
    <property type="gene ID" value="APE_2366.1"/>
</dbReference>
<dbReference type="GeneID" id="1445377"/>
<dbReference type="KEGG" id="ape:APE_2366.1"/>
<dbReference type="PATRIC" id="fig|272557.25.peg.1581"/>
<dbReference type="eggNOG" id="arCOG01563">
    <property type="taxonomic scope" value="Archaea"/>
</dbReference>
<dbReference type="Proteomes" id="UP000002518">
    <property type="component" value="Chromosome"/>
</dbReference>
<dbReference type="GO" id="GO:0005829">
    <property type="term" value="C:cytosol"/>
    <property type="evidence" value="ECO:0007669"/>
    <property type="project" value="TreeGrafter"/>
</dbReference>
<dbReference type="GO" id="GO:0005525">
    <property type="term" value="F:GTP binding"/>
    <property type="evidence" value="ECO:0007669"/>
    <property type="project" value="UniProtKB-UniRule"/>
</dbReference>
<dbReference type="GO" id="GO:0003924">
    <property type="term" value="F:GTPase activity"/>
    <property type="evidence" value="ECO:0007669"/>
    <property type="project" value="InterPro"/>
</dbReference>
<dbReference type="GO" id="GO:0046872">
    <property type="term" value="F:metal ion binding"/>
    <property type="evidence" value="ECO:0007669"/>
    <property type="project" value="UniProtKB-KW"/>
</dbReference>
<dbReference type="GO" id="GO:0003746">
    <property type="term" value="F:translation elongation factor activity"/>
    <property type="evidence" value="ECO:0007669"/>
    <property type="project" value="UniProtKB-UniRule"/>
</dbReference>
<dbReference type="GO" id="GO:0003743">
    <property type="term" value="F:translation initiation factor activity"/>
    <property type="evidence" value="ECO:0007669"/>
    <property type="project" value="UniProtKB-KW"/>
</dbReference>
<dbReference type="GO" id="GO:0000049">
    <property type="term" value="F:tRNA binding"/>
    <property type="evidence" value="ECO:0007669"/>
    <property type="project" value="InterPro"/>
</dbReference>
<dbReference type="GO" id="GO:0001731">
    <property type="term" value="P:formation of translation preinitiation complex"/>
    <property type="evidence" value="ECO:0007669"/>
    <property type="project" value="TreeGrafter"/>
</dbReference>
<dbReference type="CDD" id="cd01888">
    <property type="entry name" value="eIF2_gamma"/>
    <property type="match status" value="1"/>
</dbReference>
<dbReference type="CDD" id="cd03688">
    <property type="entry name" value="eIF2_gamma_II"/>
    <property type="match status" value="1"/>
</dbReference>
<dbReference type="CDD" id="cd15490">
    <property type="entry name" value="eIF2_gamma_III"/>
    <property type="match status" value="1"/>
</dbReference>
<dbReference type="FunFam" id="2.40.30.10:FF:000009">
    <property type="entry name" value="Eukaryotic translation initiation factor 2 subunit gamma"/>
    <property type="match status" value="1"/>
</dbReference>
<dbReference type="FunFam" id="3.40.50.300:FF:000065">
    <property type="entry name" value="Eukaryotic translation initiation factor 2 subunit gamma"/>
    <property type="match status" value="1"/>
</dbReference>
<dbReference type="FunFam" id="2.40.30.10:FF:000075">
    <property type="entry name" value="Translation initiation factor 2 subunit gamma"/>
    <property type="match status" value="1"/>
</dbReference>
<dbReference type="Gene3D" id="3.40.50.300">
    <property type="entry name" value="P-loop containing nucleotide triphosphate hydrolases"/>
    <property type="match status" value="1"/>
</dbReference>
<dbReference type="Gene3D" id="2.40.30.10">
    <property type="entry name" value="Translation factors"/>
    <property type="match status" value="2"/>
</dbReference>
<dbReference type="HAMAP" id="MF_00119">
    <property type="entry name" value="eIF_2_gamma"/>
    <property type="match status" value="1"/>
</dbReference>
<dbReference type="InterPro" id="IPR050543">
    <property type="entry name" value="eIF2G"/>
</dbReference>
<dbReference type="InterPro" id="IPR015256">
    <property type="entry name" value="eIF2g_C"/>
</dbReference>
<dbReference type="InterPro" id="IPR044127">
    <property type="entry name" value="eIF2g_dom_2"/>
</dbReference>
<dbReference type="InterPro" id="IPR044128">
    <property type="entry name" value="eIF2g_GTP-bd"/>
</dbReference>
<dbReference type="InterPro" id="IPR027417">
    <property type="entry name" value="P-loop_NTPase"/>
</dbReference>
<dbReference type="InterPro" id="IPR005225">
    <property type="entry name" value="Small_GTP-bd"/>
</dbReference>
<dbReference type="InterPro" id="IPR000795">
    <property type="entry name" value="T_Tr_GTP-bd_dom"/>
</dbReference>
<dbReference type="InterPro" id="IPR022424">
    <property type="entry name" value="TIF2_gsu"/>
</dbReference>
<dbReference type="InterPro" id="IPR009000">
    <property type="entry name" value="Transl_B-barrel_sf"/>
</dbReference>
<dbReference type="InterPro" id="IPR009001">
    <property type="entry name" value="Transl_elong_EF1A/Init_IF2_C"/>
</dbReference>
<dbReference type="NCBIfam" id="TIGR03680">
    <property type="entry name" value="eif2g_arch"/>
    <property type="match status" value="1"/>
</dbReference>
<dbReference type="NCBIfam" id="NF003077">
    <property type="entry name" value="PRK04000.1"/>
    <property type="match status" value="1"/>
</dbReference>
<dbReference type="NCBIfam" id="TIGR00231">
    <property type="entry name" value="small_GTP"/>
    <property type="match status" value="1"/>
</dbReference>
<dbReference type="PANTHER" id="PTHR42854">
    <property type="entry name" value="EUKARYOTIC TRANSLATION INITIATION FACTOR 2 SUBUNIT 3 FAMILY MEMBER"/>
    <property type="match status" value="1"/>
</dbReference>
<dbReference type="PANTHER" id="PTHR42854:SF3">
    <property type="entry name" value="EUKARYOTIC TRANSLATION INITIATION FACTOR 2 SUBUNIT 3-RELATED"/>
    <property type="match status" value="1"/>
</dbReference>
<dbReference type="Pfam" id="PF09173">
    <property type="entry name" value="eIF2_C"/>
    <property type="match status" value="1"/>
</dbReference>
<dbReference type="Pfam" id="PF00009">
    <property type="entry name" value="GTP_EFTU"/>
    <property type="match status" value="1"/>
</dbReference>
<dbReference type="PRINTS" id="PR00315">
    <property type="entry name" value="ELONGATNFCT"/>
</dbReference>
<dbReference type="SUPFAM" id="SSF50465">
    <property type="entry name" value="EF-Tu/eEF-1alpha/eIF2-gamma C-terminal domain"/>
    <property type="match status" value="1"/>
</dbReference>
<dbReference type="SUPFAM" id="SSF52540">
    <property type="entry name" value="P-loop containing nucleoside triphosphate hydrolases"/>
    <property type="match status" value="1"/>
</dbReference>
<dbReference type="SUPFAM" id="SSF50447">
    <property type="entry name" value="Translation proteins"/>
    <property type="match status" value="1"/>
</dbReference>
<dbReference type="PROSITE" id="PS51722">
    <property type="entry name" value="G_TR_2"/>
    <property type="match status" value="1"/>
</dbReference>